<name>PILIN_MYCBO</name>
<sequence>MYRFACRTLMLAACILATGVAGLGVGAQSAAQTAPVPDYYWCPGQPFDPAWGPNWDPYTCHDDFHRDSDGPDHSRDYPGPILEGPVLDDPGAAPPPPAAGGGA</sequence>
<gene>
    <name type="primary">mtp</name>
    <name type="ordered locus">BQ2027_MB3341C</name>
</gene>
<protein>
    <recommendedName>
        <fullName>Pilin</fullName>
    </recommendedName>
    <alternativeName>
        <fullName>Pili structural subunit</fullName>
    </alternativeName>
</protein>
<accession>Q7TWR6</accession>
<accession>A0A1R3Y3S7</accession>
<accession>X2BN94</accession>
<comment type="function">
    <text evidence="1">Structural subunit of pili, which are thin, flexible, coiled-coil, aggregative fibers. Mediates adhesion to the extracellular matrix, an event that would facilitate direct interaction with the host epithelium during infection in the lung or other tissues (By similarity).</text>
</comment>
<comment type="subunit">
    <text evidence="1">Forms a homomer composed of subunits assembled in a large structure.</text>
</comment>
<comment type="subcellular location">
    <subcellularLocation>
        <location evidence="1">Fimbrium</location>
    </subcellularLocation>
    <text evidence="1">Part of the pili surface structure.</text>
</comment>
<comment type="similarity">
    <text evidence="4">Belongs to the mycobacterial pilin family.</text>
</comment>
<organism>
    <name type="scientific">Mycobacterium bovis (strain ATCC BAA-935 / AF2122/97)</name>
    <dbReference type="NCBI Taxonomy" id="233413"/>
    <lineage>
        <taxon>Bacteria</taxon>
        <taxon>Bacillati</taxon>
        <taxon>Actinomycetota</taxon>
        <taxon>Actinomycetes</taxon>
        <taxon>Mycobacteriales</taxon>
        <taxon>Mycobacteriaceae</taxon>
        <taxon>Mycobacterium</taxon>
        <taxon>Mycobacterium tuberculosis complex</taxon>
    </lineage>
</organism>
<evidence type="ECO:0000250" key="1"/>
<evidence type="ECO:0000255" key="2"/>
<evidence type="ECO:0000256" key="3">
    <source>
        <dbReference type="SAM" id="MobiDB-lite"/>
    </source>
</evidence>
<evidence type="ECO:0000305" key="4"/>
<feature type="signal peptide" evidence="2">
    <location>
        <begin position="1"/>
        <end position="30"/>
    </location>
</feature>
<feature type="chain" id="PRO_0000314593" description="Pilin">
    <location>
        <begin position="31"/>
        <end position="103"/>
    </location>
</feature>
<feature type="region of interest" description="Disordered" evidence="3">
    <location>
        <begin position="61"/>
        <end position="103"/>
    </location>
</feature>
<feature type="compositionally biased region" description="Basic and acidic residues" evidence="3">
    <location>
        <begin position="61"/>
        <end position="76"/>
    </location>
</feature>
<feature type="compositionally biased region" description="Pro residues" evidence="3">
    <location>
        <begin position="92"/>
        <end position="103"/>
    </location>
</feature>
<dbReference type="EMBL" id="LT708304">
    <property type="protein sequence ID" value="SIU01970.1"/>
    <property type="molecule type" value="Genomic_DNA"/>
</dbReference>
<dbReference type="RefSeq" id="NP_856986.1">
    <property type="nucleotide sequence ID" value="NC_002945.3"/>
</dbReference>
<dbReference type="RefSeq" id="WP_003417257.1">
    <property type="nucleotide sequence ID" value="NC_002945.4"/>
</dbReference>
<dbReference type="GeneID" id="45427312"/>
<dbReference type="KEGG" id="mbo:BQ2027_MB3341C"/>
<dbReference type="PATRIC" id="fig|233413.5.peg.3672"/>
<dbReference type="Proteomes" id="UP000001419">
    <property type="component" value="Chromosome"/>
</dbReference>
<dbReference type="GO" id="GO:0009289">
    <property type="term" value="C:pilus"/>
    <property type="evidence" value="ECO:0007669"/>
    <property type="project" value="UniProtKB-SubCell"/>
</dbReference>
<dbReference type="GO" id="GO:0007155">
    <property type="term" value="P:cell adhesion"/>
    <property type="evidence" value="ECO:0007669"/>
    <property type="project" value="UniProtKB-KW"/>
</dbReference>
<proteinExistence type="inferred from homology"/>
<keyword id="KW-0130">Cell adhesion</keyword>
<keyword id="KW-0281">Fimbrium</keyword>
<keyword id="KW-1185">Reference proteome</keyword>
<keyword id="KW-0732">Signal</keyword>
<keyword id="KW-0843">Virulence</keyword>
<reference key="1">
    <citation type="journal article" date="2003" name="Proc. Natl. Acad. Sci. U.S.A.">
        <title>The complete genome sequence of Mycobacterium bovis.</title>
        <authorList>
            <person name="Garnier T."/>
            <person name="Eiglmeier K."/>
            <person name="Camus J.-C."/>
            <person name="Medina N."/>
            <person name="Mansoor H."/>
            <person name="Pryor M."/>
            <person name="Duthoy S."/>
            <person name="Grondin S."/>
            <person name="Lacroix C."/>
            <person name="Monsempe C."/>
            <person name="Simon S."/>
            <person name="Harris B."/>
            <person name="Atkin R."/>
            <person name="Doggett J."/>
            <person name="Mayes R."/>
            <person name="Keating L."/>
            <person name="Wheeler P.R."/>
            <person name="Parkhill J."/>
            <person name="Barrell B.G."/>
            <person name="Cole S.T."/>
            <person name="Gordon S.V."/>
            <person name="Hewinson R.G."/>
        </authorList>
    </citation>
    <scope>NUCLEOTIDE SEQUENCE [LARGE SCALE GENOMIC DNA]</scope>
    <source>
        <strain>ATCC BAA-935 / AF2122/97</strain>
    </source>
</reference>
<reference key="2">
    <citation type="journal article" date="2017" name="Genome Announc.">
        <title>Updated reference genome sequence and annotation of Mycobacterium bovis AF2122/97.</title>
        <authorList>
            <person name="Malone K.M."/>
            <person name="Farrell D."/>
            <person name="Stuber T.P."/>
            <person name="Schubert O.T."/>
            <person name="Aebersold R."/>
            <person name="Robbe-Austerman S."/>
            <person name="Gordon S.V."/>
        </authorList>
    </citation>
    <scope>NUCLEOTIDE SEQUENCE [LARGE SCALE GENOMIC DNA]</scope>
    <scope>GENOME REANNOTATION</scope>
    <source>
        <strain>ATCC BAA-935 / AF2122/97</strain>
    </source>
</reference>